<feature type="chain" id="PRO_1000144667" description="Large ribosomal subunit protein uL30">
    <location>
        <begin position="1"/>
        <end position="59"/>
    </location>
</feature>
<accession>B1KSK7</accession>
<dbReference type="EMBL" id="CP000962">
    <property type="protein sequence ID" value="ACA56513.1"/>
    <property type="molecule type" value="Genomic_DNA"/>
</dbReference>
<dbReference type="RefSeq" id="WP_003357637.1">
    <property type="nucleotide sequence ID" value="NC_010520.1"/>
</dbReference>
<dbReference type="SMR" id="B1KSK7"/>
<dbReference type="GeneID" id="92940232"/>
<dbReference type="KEGG" id="cbl:CLK_2906"/>
<dbReference type="HOGENOM" id="CLU_131047_2_1_9"/>
<dbReference type="GO" id="GO:0022625">
    <property type="term" value="C:cytosolic large ribosomal subunit"/>
    <property type="evidence" value="ECO:0007669"/>
    <property type="project" value="TreeGrafter"/>
</dbReference>
<dbReference type="GO" id="GO:0003735">
    <property type="term" value="F:structural constituent of ribosome"/>
    <property type="evidence" value="ECO:0007669"/>
    <property type="project" value="InterPro"/>
</dbReference>
<dbReference type="GO" id="GO:0006412">
    <property type="term" value="P:translation"/>
    <property type="evidence" value="ECO:0007669"/>
    <property type="project" value="UniProtKB-UniRule"/>
</dbReference>
<dbReference type="CDD" id="cd01658">
    <property type="entry name" value="Ribosomal_L30"/>
    <property type="match status" value="1"/>
</dbReference>
<dbReference type="FunFam" id="3.30.1390.20:FF:000001">
    <property type="entry name" value="50S ribosomal protein L30"/>
    <property type="match status" value="1"/>
</dbReference>
<dbReference type="Gene3D" id="3.30.1390.20">
    <property type="entry name" value="Ribosomal protein L30, ferredoxin-like fold domain"/>
    <property type="match status" value="1"/>
</dbReference>
<dbReference type="HAMAP" id="MF_01371_B">
    <property type="entry name" value="Ribosomal_uL30_B"/>
    <property type="match status" value="1"/>
</dbReference>
<dbReference type="InterPro" id="IPR036919">
    <property type="entry name" value="Ribo_uL30_ferredoxin-like_sf"/>
</dbReference>
<dbReference type="InterPro" id="IPR005996">
    <property type="entry name" value="Ribosomal_uL30_bac-type"/>
</dbReference>
<dbReference type="InterPro" id="IPR016082">
    <property type="entry name" value="Ribosomal_uL30_ferredoxin-like"/>
</dbReference>
<dbReference type="NCBIfam" id="TIGR01308">
    <property type="entry name" value="rpmD_bact"/>
    <property type="match status" value="1"/>
</dbReference>
<dbReference type="PANTHER" id="PTHR15892:SF2">
    <property type="entry name" value="LARGE RIBOSOMAL SUBUNIT PROTEIN UL30M"/>
    <property type="match status" value="1"/>
</dbReference>
<dbReference type="PANTHER" id="PTHR15892">
    <property type="entry name" value="MITOCHONDRIAL RIBOSOMAL PROTEIN L30"/>
    <property type="match status" value="1"/>
</dbReference>
<dbReference type="Pfam" id="PF00327">
    <property type="entry name" value="Ribosomal_L30"/>
    <property type="match status" value="1"/>
</dbReference>
<dbReference type="PIRSF" id="PIRSF002211">
    <property type="entry name" value="Ribosomal_L30_bac-type"/>
    <property type="match status" value="1"/>
</dbReference>
<dbReference type="SUPFAM" id="SSF55129">
    <property type="entry name" value="Ribosomal protein L30p/L7e"/>
    <property type="match status" value="1"/>
</dbReference>
<organism>
    <name type="scientific">Clostridium botulinum (strain Loch Maree / Type A3)</name>
    <dbReference type="NCBI Taxonomy" id="498214"/>
    <lineage>
        <taxon>Bacteria</taxon>
        <taxon>Bacillati</taxon>
        <taxon>Bacillota</taxon>
        <taxon>Clostridia</taxon>
        <taxon>Eubacteriales</taxon>
        <taxon>Clostridiaceae</taxon>
        <taxon>Clostridium</taxon>
    </lineage>
</organism>
<keyword id="KW-0687">Ribonucleoprotein</keyword>
<keyword id="KW-0689">Ribosomal protein</keyword>
<proteinExistence type="inferred from homology"/>
<comment type="subunit">
    <text evidence="1">Part of the 50S ribosomal subunit.</text>
</comment>
<comment type="similarity">
    <text evidence="1">Belongs to the universal ribosomal protein uL30 family.</text>
</comment>
<sequence>MAKVKITLVKSLIGRKKDQIATVNALGLKKIGNIVEHEETPQISGMIKKVSYLLKVEEA</sequence>
<name>RL30_CLOBM</name>
<reference key="1">
    <citation type="journal article" date="2007" name="PLoS ONE">
        <title>Analysis of the neurotoxin complex genes in Clostridium botulinum A1-A4 and B1 strains: BoNT/A3, /Ba4 and /B1 clusters are located within plasmids.</title>
        <authorList>
            <person name="Smith T.J."/>
            <person name="Hill K.K."/>
            <person name="Foley B.T."/>
            <person name="Detter J.C."/>
            <person name="Munk A.C."/>
            <person name="Bruce D.C."/>
            <person name="Doggett N.A."/>
            <person name="Smith L.A."/>
            <person name="Marks J.D."/>
            <person name="Xie G."/>
            <person name="Brettin T.S."/>
        </authorList>
    </citation>
    <scope>NUCLEOTIDE SEQUENCE [LARGE SCALE GENOMIC DNA]</scope>
    <source>
        <strain>Loch Maree / Type A3</strain>
    </source>
</reference>
<protein>
    <recommendedName>
        <fullName evidence="1">Large ribosomal subunit protein uL30</fullName>
    </recommendedName>
    <alternativeName>
        <fullName evidence="2">50S ribosomal protein L30</fullName>
    </alternativeName>
</protein>
<gene>
    <name evidence="1" type="primary">rpmD</name>
    <name type="ordered locus">CLK_2906</name>
</gene>
<evidence type="ECO:0000255" key="1">
    <source>
        <dbReference type="HAMAP-Rule" id="MF_01371"/>
    </source>
</evidence>
<evidence type="ECO:0000305" key="2"/>